<sequence>MTTVNLAAYRFVSLDSIEQWRPLVAARCNTLGLRGTILLAPEGINLFIAGPREATDAFVDYIRHDPLFEGKFADLPFKESLSDSQPFRRMLVRLKREIITMKKPAIKPELGRAPAVDARTLKAWLDQGHDDAGRPVVMLDTRNAFEVDVGTFDRALDYRIDKFSEFPAVIEANRADLEGKTIVSFCTGGIRCEKAAIHMKDVGIENVYQLEGGILKYFEEVGGAHYHGDCFVFDYRTALNPQLAPTADVTCFACRAVVPADAQQSPLYVPGKCCPACHPGDSGTPGRRAEPGAEPARAV</sequence>
<organism>
    <name type="scientific">Burkholderia pseudomallei (strain 1106a)</name>
    <dbReference type="NCBI Taxonomy" id="357348"/>
    <lineage>
        <taxon>Bacteria</taxon>
        <taxon>Pseudomonadati</taxon>
        <taxon>Pseudomonadota</taxon>
        <taxon>Betaproteobacteria</taxon>
        <taxon>Burkholderiales</taxon>
        <taxon>Burkholderiaceae</taxon>
        <taxon>Burkholderia</taxon>
        <taxon>pseudomallei group</taxon>
    </lineage>
</organism>
<comment type="function">
    <text evidence="1">Catalyzes oxygen-dependent 5-hydroxyuridine (ho5U) modification at position 34 in tRNAs.</text>
</comment>
<comment type="catalytic activity">
    <reaction evidence="1">
        <text>uridine(34) in tRNA + AH2 + O2 = 5-hydroxyuridine(34) in tRNA + A + H2O</text>
        <dbReference type="Rhea" id="RHEA:64224"/>
        <dbReference type="Rhea" id="RHEA-COMP:11727"/>
        <dbReference type="Rhea" id="RHEA-COMP:13381"/>
        <dbReference type="ChEBI" id="CHEBI:13193"/>
        <dbReference type="ChEBI" id="CHEBI:15377"/>
        <dbReference type="ChEBI" id="CHEBI:15379"/>
        <dbReference type="ChEBI" id="CHEBI:17499"/>
        <dbReference type="ChEBI" id="CHEBI:65315"/>
        <dbReference type="ChEBI" id="CHEBI:136877"/>
    </reaction>
</comment>
<comment type="similarity">
    <text evidence="1">Belongs to the TrhO family.</text>
</comment>
<gene>
    <name evidence="1" type="primary">trhO</name>
    <name type="ordered locus">BURPS1106A_1204</name>
</gene>
<reference key="1">
    <citation type="journal article" date="2010" name="Genome Biol. Evol.">
        <title>Continuing evolution of Burkholderia mallei through genome reduction and large-scale rearrangements.</title>
        <authorList>
            <person name="Losada L."/>
            <person name="Ronning C.M."/>
            <person name="DeShazer D."/>
            <person name="Woods D."/>
            <person name="Fedorova N."/>
            <person name="Kim H.S."/>
            <person name="Shabalina S.A."/>
            <person name="Pearson T.R."/>
            <person name="Brinkac L."/>
            <person name="Tan P."/>
            <person name="Nandi T."/>
            <person name="Crabtree J."/>
            <person name="Badger J."/>
            <person name="Beckstrom-Sternberg S."/>
            <person name="Saqib M."/>
            <person name="Schutzer S.E."/>
            <person name="Keim P."/>
            <person name="Nierman W.C."/>
        </authorList>
    </citation>
    <scope>NUCLEOTIDE SEQUENCE [LARGE SCALE GENOMIC DNA]</scope>
    <source>
        <strain>1106a</strain>
    </source>
</reference>
<dbReference type="EC" id="1.14.-.-" evidence="1"/>
<dbReference type="EMBL" id="CP000572">
    <property type="protein sequence ID" value="ABN91385.1"/>
    <property type="molecule type" value="Genomic_DNA"/>
</dbReference>
<dbReference type="RefSeq" id="WP_004535328.1">
    <property type="nucleotide sequence ID" value="NC_009076.1"/>
</dbReference>
<dbReference type="SMR" id="A3NT12"/>
<dbReference type="KEGG" id="bpl:BURPS1106A_1204"/>
<dbReference type="HOGENOM" id="CLU_038878_0_1_4"/>
<dbReference type="Proteomes" id="UP000006738">
    <property type="component" value="Chromosome I"/>
</dbReference>
<dbReference type="GO" id="GO:0016705">
    <property type="term" value="F:oxidoreductase activity, acting on paired donors, with incorporation or reduction of molecular oxygen"/>
    <property type="evidence" value="ECO:0007669"/>
    <property type="project" value="UniProtKB-UniRule"/>
</dbReference>
<dbReference type="GO" id="GO:0006400">
    <property type="term" value="P:tRNA modification"/>
    <property type="evidence" value="ECO:0007669"/>
    <property type="project" value="UniProtKB-UniRule"/>
</dbReference>
<dbReference type="CDD" id="cd01518">
    <property type="entry name" value="RHOD_YceA"/>
    <property type="match status" value="1"/>
</dbReference>
<dbReference type="Gene3D" id="3.30.70.100">
    <property type="match status" value="1"/>
</dbReference>
<dbReference type="Gene3D" id="3.40.250.10">
    <property type="entry name" value="Rhodanese-like domain"/>
    <property type="match status" value="1"/>
</dbReference>
<dbReference type="HAMAP" id="MF_00469">
    <property type="entry name" value="TrhO"/>
    <property type="match status" value="1"/>
</dbReference>
<dbReference type="InterPro" id="IPR001763">
    <property type="entry name" value="Rhodanese-like_dom"/>
</dbReference>
<dbReference type="InterPro" id="IPR036873">
    <property type="entry name" value="Rhodanese-like_dom_sf"/>
</dbReference>
<dbReference type="InterPro" id="IPR020936">
    <property type="entry name" value="TrhO"/>
</dbReference>
<dbReference type="InterPro" id="IPR040503">
    <property type="entry name" value="TRHO_N"/>
</dbReference>
<dbReference type="NCBIfam" id="NF003703">
    <property type="entry name" value="PRK05320.1"/>
    <property type="match status" value="1"/>
</dbReference>
<dbReference type="PANTHER" id="PTHR43268:SF3">
    <property type="entry name" value="RHODANESE-LIKE DOMAIN-CONTAINING PROTEIN 7-RELATED"/>
    <property type="match status" value="1"/>
</dbReference>
<dbReference type="PANTHER" id="PTHR43268">
    <property type="entry name" value="THIOSULFATE SULFURTRANSFERASE/RHODANESE-LIKE DOMAIN-CONTAINING PROTEIN 2"/>
    <property type="match status" value="1"/>
</dbReference>
<dbReference type="Pfam" id="PF00581">
    <property type="entry name" value="Rhodanese"/>
    <property type="match status" value="1"/>
</dbReference>
<dbReference type="Pfam" id="PF17773">
    <property type="entry name" value="UPF0176_N"/>
    <property type="match status" value="1"/>
</dbReference>
<dbReference type="SMART" id="SM00450">
    <property type="entry name" value="RHOD"/>
    <property type="match status" value="1"/>
</dbReference>
<dbReference type="SUPFAM" id="SSF52821">
    <property type="entry name" value="Rhodanese/Cell cycle control phosphatase"/>
    <property type="match status" value="1"/>
</dbReference>
<dbReference type="PROSITE" id="PS50206">
    <property type="entry name" value="RHODANESE_3"/>
    <property type="match status" value="1"/>
</dbReference>
<evidence type="ECO:0000255" key="1">
    <source>
        <dbReference type="HAMAP-Rule" id="MF_00469"/>
    </source>
</evidence>
<name>TRHO_BURP0</name>
<protein>
    <recommendedName>
        <fullName evidence="1">tRNA uridine(34) hydroxylase</fullName>
        <ecNumber evidence="1">1.14.-.-</ecNumber>
    </recommendedName>
    <alternativeName>
        <fullName evidence="1">tRNA hydroxylation protein O</fullName>
    </alternativeName>
</protein>
<accession>A3NT12</accession>
<feature type="chain" id="PRO_1000013731" description="tRNA uridine(34) hydroxylase">
    <location>
        <begin position="1"/>
        <end position="299"/>
    </location>
</feature>
<feature type="domain" description="Rhodanese" evidence="1">
    <location>
        <begin position="132"/>
        <end position="226"/>
    </location>
</feature>
<feature type="active site" description="Cysteine persulfide intermediate" evidence="1">
    <location>
        <position position="186"/>
    </location>
</feature>
<proteinExistence type="inferred from homology"/>
<keyword id="KW-0560">Oxidoreductase</keyword>
<keyword id="KW-0819">tRNA processing</keyword>